<sequence length="202" mass="21269">MRLAAENLSGERGGETVFSGVSFALGQSETLLVTGPNGAGKSTLLRIIAGLLPVAKGHVAFSGGGEIFPDAGAACHYLGHLNGMKPALSIEENLVFWRDFLGEERLSPLEALEIVGLGEIAHLPFGYLSTGQRRRTAIARLLVSYRPVWLLDEPTAGLDRASEAQFAEVMRAHLSAGGIIVAATHLPLGLEGTQELKMGAGN</sequence>
<dbReference type="EC" id="7.6.2.5" evidence="1"/>
<dbReference type="EMBL" id="CP000390">
    <property type="protein sequence ID" value="ABG64729.1"/>
    <property type="molecule type" value="Genomic_DNA"/>
</dbReference>
<dbReference type="SMR" id="Q11CZ6"/>
<dbReference type="STRING" id="266779.Meso_3358"/>
<dbReference type="KEGG" id="mes:Meso_3358"/>
<dbReference type="eggNOG" id="COG4133">
    <property type="taxonomic scope" value="Bacteria"/>
</dbReference>
<dbReference type="HOGENOM" id="CLU_000604_1_2_5"/>
<dbReference type="OrthoDB" id="9800654at2"/>
<dbReference type="GO" id="GO:0005886">
    <property type="term" value="C:plasma membrane"/>
    <property type="evidence" value="ECO:0007669"/>
    <property type="project" value="UniProtKB-SubCell"/>
</dbReference>
<dbReference type="GO" id="GO:0015439">
    <property type="term" value="F:ABC-type heme transporter activity"/>
    <property type="evidence" value="ECO:0007669"/>
    <property type="project" value="UniProtKB-EC"/>
</dbReference>
<dbReference type="GO" id="GO:0005524">
    <property type="term" value="F:ATP binding"/>
    <property type="evidence" value="ECO:0007669"/>
    <property type="project" value="UniProtKB-KW"/>
</dbReference>
<dbReference type="GO" id="GO:0016887">
    <property type="term" value="F:ATP hydrolysis activity"/>
    <property type="evidence" value="ECO:0007669"/>
    <property type="project" value="InterPro"/>
</dbReference>
<dbReference type="GO" id="GO:0017004">
    <property type="term" value="P:cytochrome complex assembly"/>
    <property type="evidence" value="ECO:0007669"/>
    <property type="project" value="UniProtKB-KW"/>
</dbReference>
<dbReference type="Gene3D" id="3.40.50.300">
    <property type="entry name" value="P-loop containing nucleotide triphosphate hydrolases"/>
    <property type="match status" value="1"/>
</dbReference>
<dbReference type="InterPro" id="IPR003593">
    <property type="entry name" value="AAA+_ATPase"/>
</dbReference>
<dbReference type="InterPro" id="IPR003439">
    <property type="entry name" value="ABC_transporter-like_ATP-bd"/>
</dbReference>
<dbReference type="InterPro" id="IPR005895">
    <property type="entry name" value="ABC_transptr_haem_export_CcmA"/>
</dbReference>
<dbReference type="InterPro" id="IPR027417">
    <property type="entry name" value="P-loop_NTPase"/>
</dbReference>
<dbReference type="NCBIfam" id="TIGR01189">
    <property type="entry name" value="ccmA"/>
    <property type="match status" value="1"/>
</dbReference>
<dbReference type="PANTHER" id="PTHR43499">
    <property type="entry name" value="ABC TRANSPORTER I FAMILY MEMBER 1"/>
    <property type="match status" value="1"/>
</dbReference>
<dbReference type="PANTHER" id="PTHR43499:SF1">
    <property type="entry name" value="ABC TRANSPORTER I FAMILY MEMBER 1"/>
    <property type="match status" value="1"/>
</dbReference>
<dbReference type="Pfam" id="PF00005">
    <property type="entry name" value="ABC_tran"/>
    <property type="match status" value="1"/>
</dbReference>
<dbReference type="SMART" id="SM00382">
    <property type="entry name" value="AAA"/>
    <property type="match status" value="1"/>
</dbReference>
<dbReference type="SUPFAM" id="SSF52540">
    <property type="entry name" value="P-loop containing nucleoside triphosphate hydrolases"/>
    <property type="match status" value="1"/>
</dbReference>
<dbReference type="PROSITE" id="PS50893">
    <property type="entry name" value="ABC_TRANSPORTER_2"/>
    <property type="match status" value="1"/>
</dbReference>
<dbReference type="PROSITE" id="PS51243">
    <property type="entry name" value="CCMA"/>
    <property type="match status" value="1"/>
</dbReference>
<gene>
    <name evidence="1" type="primary">ccmA</name>
    <name type="ordered locus">Meso_3358</name>
</gene>
<proteinExistence type="inferred from homology"/>
<name>CCMA_CHESB</name>
<protein>
    <recommendedName>
        <fullName evidence="1">Cytochrome c biogenesis ATP-binding export protein CcmA</fullName>
        <ecNumber evidence="1">7.6.2.5</ecNumber>
    </recommendedName>
    <alternativeName>
        <fullName evidence="1">Heme exporter protein A</fullName>
    </alternativeName>
</protein>
<evidence type="ECO:0000255" key="1">
    <source>
        <dbReference type="HAMAP-Rule" id="MF_01707"/>
    </source>
</evidence>
<feature type="chain" id="PRO_0000271933" description="Cytochrome c biogenesis ATP-binding export protein CcmA">
    <location>
        <begin position="1"/>
        <end position="202"/>
    </location>
</feature>
<feature type="domain" description="ABC transporter" evidence="1">
    <location>
        <begin position="3"/>
        <end position="200"/>
    </location>
</feature>
<feature type="binding site" evidence="1">
    <location>
        <begin position="35"/>
        <end position="42"/>
    </location>
    <ligand>
        <name>ATP</name>
        <dbReference type="ChEBI" id="CHEBI:30616"/>
    </ligand>
</feature>
<organism>
    <name type="scientific">Chelativorans sp. (strain BNC1)</name>
    <dbReference type="NCBI Taxonomy" id="266779"/>
    <lineage>
        <taxon>Bacteria</taxon>
        <taxon>Pseudomonadati</taxon>
        <taxon>Pseudomonadota</taxon>
        <taxon>Alphaproteobacteria</taxon>
        <taxon>Hyphomicrobiales</taxon>
        <taxon>Phyllobacteriaceae</taxon>
        <taxon>Chelativorans</taxon>
    </lineage>
</organism>
<keyword id="KW-0067">ATP-binding</keyword>
<keyword id="KW-0997">Cell inner membrane</keyword>
<keyword id="KW-1003">Cell membrane</keyword>
<keyword id="KW-0201">Cytochrome c-type biogenesis</keyword>
<keyword id="KW-0472">Membrane</keyword>
<keyword id="KW-0547">Nucleotide-binding</keyword>
<keyword id="KW-1278">Translocase</keyword>
<keyword id="KW-0813">Transport</keyword>
<accession>Q11CZ6</accession>
<reference key="1">
    <citation type="submission" date="2006-06" db="EMBL/GenBank/DDBJ databases">
        <title>Complete sequence of chromosome of Mesorhizobium sp. BNC1.</title>
        <authorList>
            <consortium name="US DOE Joint Genome Institute"/>
            <person name="Copeland A."/>
            <person name="Lucas S."/>
            <person name="Lapidus A."/>
            <person name="Barry K."/>
            <person name="Detter J.C."/>
            <person name="Glavina del Rio T."/>
            <person name="Hammon N."/>
            <person name="Israni S."/>
            <person name="Dalin E."/>
            <person name="Tice H."/>
            <person name="Pitluck S."/>
            <person name="Chertkov O."/>
            <person name="Brettin T."/>
            <person name="Bruce D."/>
            <person name="Han C."/>
            <person name="Tapia R."/>
            <person name="Gilna P."/>
            <person name="Schmutz J."/>
            <person name="Larimer F."/>
            <person name="Land M."/>
            <person name="Hauser L."/>
            <person name="Kyrpides N."/>
            <person name="Mikhailova N."/>
            <person name="Richardson P."/>
        </authorList>
    </citation>
    <scope>NUCLEOTIDE SEQUENCE [LARGE SCALE GENOMIC DNA]</scope>
    <source>
        <strain>BNC1</strain>
    </source>
</reference>
<comment type="function">
    <text evidence="1">Part of the ABC transporter complex CcmAB involved in the biogenesis of c-type cytochromes; once thought to export heme, this seems not to be the case, but its exact role is uncertain. Responsible for energy coupling to the transport system.</text>
</comment>
<comment type="catalytic activity">
    <reaction evidence="1">
        <text>heme b(in) + ATP + H2O = heme b(out) + ADP + phosphate + H(+)</text>
        <dbReference type="Rhea" id="RHEA:19261"/>
        <dbReference type="ChEBI" id="CHEBI:15377"/>
        <dbReference type="ChEBI" id="CHEBI:15378"/>
        <dbReference type="ChEBI" id="CHEBI:30616"/>
        <dbReference type="ChEBI" id="CHEBI:43474"/>
        <dbReference type="ChEBI" id="CHEBI:60344"/>
        <dbReference type="ChEBI" id="CHEBI:456216"/>
        <dbReference type="EC" id="7.6.2.5"/>
    </reaction>
</comment>
<comment type="subunit">
    <text evidence="1">The complex is composed of two ATP-binding proteins (CcmA) and two transmembrane proteins (CcmB).</text>
</comment>
<comment type="subcellular location">
    <subcellularLocation>
        <location evidence="1">Cell inner membrane</location>
        <topology evidence="1">Peripheral membrane protein</topology>
    </subcellularLocation>
</comment>
<comment type="similarity">
    <text evidence="1">Belongs to the ABC transporter superfamily. CcmA exporter (TC 3.A.1.107) family.</text>
</comment>